<sequence length="367" mass="39152">MSANAFGKLFTVTTFGESHGPAIGCVVDGCPPGLEIAPEEFSHDLQRRASGKSRHTSARREADEIEILSGVYEGRTTGTPIGLLIRNTDQRSKDYSNIAQQFRPGHADYTYWQKYGIRDPRGGGRSSARETTMRVAAGVIAKKWLKQRYGVLVRGFLSQLGEIRPAGFDWDAVEDNPFFWPHAAQVPELETYMDALRKSGDSVGARVDVLAGGVPAGWGEPIYGKLDAELAAALMSINAVKGVEIGDGFASAAQKGTEHRDLITPEGFRSNHAGGILGGISTGQAVTASMVLKPTSSLRLPGATVDADGSVVDVITTGRHDPCVGIRATPIAEAMMALVLMDQALRHRAQCGDVGEISPRIPGQVDV</sequence>
<proteinExistence type="inferred from homology"/>
<accession>B2SVP7</accession>
<evidence type="ECO:0000255" key="1">
    <source>
        <dbReference type="HAMAP-Rule" id="MF_00300"/>
    </source>
</evidence>
<evidence type="ECO:0000256" key="2">
    <source>
        <dbReference type="SAM" id="MobiDB-lite"/>
    </source>
</evidence>
<protein>
    <recommendedName>
        <fullName evidence="1">Chorismate synthase</fullName>
        <shortName evidence="1">CS</shortName>
        <ecNumber evidence="1">4.2.3.5</ecNumber>
    </recommendedName>
    <alternativeName>
        <fullName evidence="1">5-enolpyruvylshikimate-3-phosphate phospholyase</fullName>
    </alternativeName>
</protein>
<feature type="chain" id="PRO_1000115416" description="Chorismate synthase">
    <location>
        <begin position="1"/>
        <end position="367"/>
    </location>
</feature>
<feature type="region of interest" description="Disordered" evidence="2">
    <location>
        <begin position="39"/>
        <end position="60"/>
    </location>
</feature>
<feature type="binding site" evidence="1">
    <location>
        <position position="48"/>
    </location>
    <ligand>
        <name>NADP(+)</name>
        <dbReference type="ChEBI" id="CHEBI:58349"/>
    </ligand>
</feature>
<feature type="binding site" evidence="1">
    <location>
        <position position="54"/>
    </location>
    <ligand>
        <name>NADP(+)</name>
        <dbReference type="ChEBI" id="CHEBI:58349"/>
    </ligand>
</feature>
<feature type="binding site" evidence="1">
    <location>
        <begin position="125"/>
        <end position="127"/>
    </location>
    <ligand>
        <name>FMN</name>
        <dbReference type="ChEBI" id="CHEBI:58210"/>
    </ligand>
</feature>
<feature type="binding site" evidence="1">
    <location>
        <begin position="238"/>
        <end position="239"/>
    </location>
    <ligand>
        <name>FMN</name>
        <dbReference type="ChEBI" id="CHEBI:58210"/>
    </ligand>
</feature>
<feature type="binding site" evidence="1">
    <location>
        <position position="278"/>
    </location>
    <ligand>
        <name>FMN</name>
        <dbReference type="ChEBI" id="CHEBI:58210"/>
    </ligand>
</feature>
<feature type="binding site" evidence="1">
    <location>
        <begin position="293"/>
        <end position="297"/>
    </location>
    <ligand>
        <name>FMN</name>
        <dbReference type="ChEBI" id="CHEBI:58210"/>
    </ligand>
</feature>
<feature type="binding site" evidence="1">
    <location>
        <position position="319"/>
    </location>
    <ligand>
        <name>FMN</name>
        <dbReference type="ChEBI" id="CHEBI:58210"/>
    </ligand>
</feature>
<keyword id="KW-0028">Amino-acid biosynthesis</keyword>
<keyword id="KW-0057">Aromatic amino acid biosynthesis</keyword>
<keyword id="KW-0274">FAD</keyword>
<keyword id="KW-0285">Flavoprotein</keyword>
<keyword id="KW-0288">FMN</keyword>
<keyword id="KW-0456">Lyase</keyword>
<keyword id="KW-0521">NADP</keyword>
<dbReference type="EC" id="4.2.3.5" evidence="1"/>
<dbReference type="EMBL" id="CP000967">
    <property type="protein sequence ID" value="ACD60121.1"/>
    <property type="molecule type" value="Genomic_DNA"/>
</dbReference>
<dbReference type="RefSeq" id="WP_011259771.1">
    <property type="nucleotide sequence ID" value="NC_010717.2"/>
</dbReference>
<dbReference type="SMR" id="B2SVP7"/>
<dbReference type="KEGG" id="xop:PXO_01260"/>
<dbReference type="eggNOG" id="COG0082">
    <property type="taxonomic scope" value="Bacteria"/>
</dbReference>
<dbReference type="HOGENOM" id="CLU_034547_0_2_6"/>
<dbReference type="UniPathway" id="UPA00053">
    <property type="reaction ID" value="UER00090"/>
</dbReference>
<dbReference type="Proteomes" id="UP000001740">
    <property type="component" value="Chromosome"/>
</dbReference>
<dbReference type="GO" id="GO:0005829">
    <property type="term" value="C:cytosol"/>
    <property type="evidence" value="ECO:0007669"/>
    <property type="project" value="TreeGrafter"/>
</dbReference>
<dbReference type="GO" id="GO:0004107">
    <property type="term" value="F:chorismate synthase activity"/>
    <property type="evidence" value="ECO:0007669"/>
    <property type="project" value="UniProtKB-UniRule"/>
</dbReference>
<dbReference type="GO" id="GO:0010181">
    <property type="term" value="F:FMN binding"/>
    <property type="evidence" value="ECO:0007669"/>
    <property type="project" value="TreeGrafter"/>
</dbReference>
<dbReference type="GO" id="GO:0008652">
    <property type="term" value="P:amino acid biosynthetic process"/>
    <property type="evidence" value="ECO:0007669"/>
    <property type="project" value="UniProtKB-KW"/>
</dbReference>
<dbReference type="GO" id="GO:0009073">
    <property type="term" value="P:aromatic amino acid family biosynthetic process"/>
    <property type="evidence" value="ECO:0007669"/>
    <property type="project" value="UniProtKB-KW"/>
</dbReference>
<dbReference type="GO" id="GO:0009423">
    <property type="term" value="P:chorismate biosynthetic process"/>
    <property type="evidence" value="ECO:0007669"/>
    <property type="project" value="UniProtKB-UniRule"/>
</dbReference>
<dbReference type="CDD" id="cd07304">
    <property type="entry name" value="Chorismate_synthase"/>
    <property type="match status" value="1"/>
</dbReference>
<dbReference type="FunFam" id="3.60.150.10:FF:000001">
    <property type="entry name" value="Chorismate synthase"/>
    <property type="match status" value="1"/>
</dbReference>
<dbReference type="Gene3D" id="3.60.150.10">
    <property type="entry name" value="Chorismate synthase AroC"/>
    <property type="match status" value="1"/>
</dbReference>
<dbReference type="HAMAP" id="MF_00300">
    <property type="entry name" value="Chorismate_synth"/>
    <property type="match status" value="1"/>
</dbReference>
<dbReference type="InterPro" id="IPR000453">
    <property type="entry name" value="Chorismate_synth"/>
</dbReference>
<dbReference type="InterPro" id="IPR035904">
    <property type="entry name" value="Chorismate_synth_AroC_sf"/>
</dbReference>
<dbReference type="InterPro" id="IPR020541">
    <property type="entry name" value="Chorismate_synthase_CS"/>
</dbReference>
<dbReference type="NCBIfam" id="TIGR00033">
    <property type="entry name" value="aroC"/>
    <property type="match status" value="1"/>
</dbReference>
<dbReference type="NCBIfam" id="NF003793">
    <property type="entry name" value="PRK05382.1"/>
    <property type="match status" value="1"/>
</dbReference>
<dbReference type="PANTHER" id="PTHR21085">
    <property type="entry name" value="CHORISMATE SYNTHASE"/>
    <property type="match status" value="1"/>
</dbReference>
<dbReference type="PANTHER" id="PTHR21085:SF0">
    <property type="entry name" value="CHORISMATE SYNTHASE"/>
    <property type="match status" value="1"/>
</dbReference>
<dbReference type="Pfam" id="PF01264">
    <property type="entry name" value="Chorismate_synt"/>
    <property type="match status" value="1"/>
</dbReference>
<dbReference type="PIRSF" id="PIRSF001456">
    <property type="entry name" value="Chorismate_synth"/>
    <property type="match status" value="1"/>
</dbReference>
<dbReference type="SUPFAM" id="SSF103263">
    <property type="entry name" value="Chorismate synthase, AroC"/>
    <property type="match status" value="1"/>
</dbReference>
<dbReference type="PROSITE" id="PS00787">
    <property type="entry name" value="CHORISMATE_SYNTHASE_1"/>
    <property type="match status" value="1"/>
</dbReference>
<dbReference type="PROSITE" id="PS00788">
    <property type="entry name" value="CHORISMATE_SYNTHASE_2"/>
    <property type="match status" value="1"/>
</dbReference>
<dbReference type="PROSITE" id="PS00789">
    <property type="entry name" value="CHORISMATE_SYNTHASE_3"/>
    <property type="match status" value="1"/>
</dbReference>
<reference key="1">
    <citation type="journal article" date="2008" name="BMC Genomics">
        <title>Genome sequence and rapid evolution of the rice pathogen Xanthomonas oryzae pv. oryzae PXO99A.</title>
        <authorList>
            <person name="Salzberg S.L."/>
            <person name="Sommer D.D."/>
            <person name="Schatz M.C."/>
            <person name="Phillippy A.M."/>
            <person name="Rabinowicz P.D."/>
            <person name="Tsuge S."/>
            <person name="Furutani A."/>
            <person name="Ochiai H."/>
            <person name="Delcher A.L."/>
            <person name="Kelley D."/>
            <person name="Madupu R."/>
            <person name="Puiu D."/>
            <person name="Radune D."/>
            <person name="Shumway M."/>
            <person name="Trapnell C."/>
            <person name="Aparna G."/>
            <person name="Jha G."/>
            <person name="Pandey A."/>
            <person name="Patil P.B."/>
            <person name="Ishihara H."/>
            <person name="Meyer D.F."/>
            <person name="Szurek B."/>
            <person name="Verdier V."/>
            <person name="Koebnik R."/>
            <person name="Dow J.M."/>
            <person name="Ryan R.P."/>
            <person name="Hirata H."/>
            <person name="Tsuyumu S."/>
            <person name="Won Lee S."/>
            <person name="Seo Y.-S."/>
            <person name="Sriariyanum M."/>
            <person name="Ronald P.C."/>
            <person name="Sonti R.V."/>
            <person name="Van Sluys M.-A."/>
            <person name="Leach J.E."/>
            <person name="White F.F."/>
            <person name="Bogdanove A.J."/>
        </authorList>
    </citation>
    <scope>NUCLEOTIDE SEQUENCE [LARGE SCALE GENOMIC DNA]</scope>
    <source>
        <strain>PXO99A</strain>
    </source>
</reference>
<organism>
    <name type="scientific">Xanthomonas oryzae pv. oryzae (strain PXO99A)</name>
    <dbReference type="NCBI Taxonomy" id="360094"/>
    <lineage>
        <taxon>Bacteria</taxon>
        <taxon>Pseudomonadati</taxon>
        <taxon>Pseudomonadota</taxon>
        <taxon>Gammaproteobacteria</taxon>
        <taxon>Lysobacterales</taxon>
        <taxon>Lysobacteraceae</taxon>
        <taxon>Xanthomonas</taxon>
    </lineage>
</organism>
<gene>
    <name evidence="1" type="primary">aroC</name>
    <name type="ordered locus">PXO_01260</name>
</gene>
<name>AROC_XANOP</name>
<comment type="function">
    <text evidence="1">Catalyzes the anti-1,4-elimination of the C-3 phosphate and the C-6 proR hydrogen from 5-enolpyruvylshikimate-3-phosphate (EPSP) to yield chorismate, which is the branch point compound that serves as the starting substrate for the three terminal pathways of aromatic amino acid biosynthesis. This reaction introduces a second double bond into the aromatic ring system.</text>
</comment>
<comment type="catalytic activity">
    <reaction evidence="1">
        <text>5-O-(1-carboxyvinyl)-3-phosphoshikimate = chorismate + phosphate</text>
        <dbReference type="Rhea" id="RHEA:21020"/>
        <dbReference type="ChEBI" id="CHEBI:29748"/>
        <dbReference type="ChEBI" id="CHEBI:43474"/>
        <dbReference type="ChEBI" id="CHEBI:57701"/>
        <dbReference type="EC" id="4.2.3.5"/>
    </reaction>
</comment>
<comment type="cofactor">
    <cofactor evidence="1">
        <name>FMNH2</name>
        <dbReference type="ChEBI" id="CHEBI:57618"/>
    </cofactor>
    <text evidence="1">Reduced FMN (FMNH(2)).</text>
</comment>
<comment type="pathway">
    <text evidence="1">Metabolic intermediate biosynthesis; chorismate biosynthesis; chorismate from D-erythrose 4-phosphate and phosphoenolpyruvate: step 7/7.</text>
</comment>
<comment type="subunit">
    <text evidence="1">Homotetramer.</text>
</comment>
<comment type="similarity">
    <text evidence="1">Belongs to the chorismate synthase family.</text>
</comment>